<geneLocation type="mitochondrion"/>
<organism>
    <name type="scientific">Lemur catta</name>
    <name type="common">Ring-tailed lemur</name>
    <dbReference type="NCBI Taxonomy" id="9447"/>
    <lineage>
        <taxon>Eukaryota</taxon>
        <taxon>Metazoa</taxon>
        <taxon>Chordata</taxon>
        <taxon>Craniata</taxon>
        <taxon>Vertebrata</taxon>
        <taxon>Euteleostomi</taxon>
        <taxon>Mammalia</taxon>
        <taxon>Eutheria</taxon>
        <taxon>Euarchontoglires</taxon>
        <taxon>Primates</taxon>
        <taxon>Strepsirrhini</taxon>
        <taxon>Lemuriformes</taxon>
        <taxon>Lemuridae</taxon>
        <taxon>Lemur</taxon>
    </lineage>
</organism>
<dbReference type="EMBL" id="AJ421451">
    <property type="protein sequence ID" value="CAD13425.1"/>
    <property type="molecule type" value="Genomic_DNA"/>
</dbReference>
<dbReference type="RefSeq" id="NP_659292.1">
    <property type="nucleotide sequence ID" value="NC_004025.1"/>
</dbReference>
<dbReference type="SMR" id="Q8LX28"/>
<dbReference type="OrthoDB" id="9835073at2759"/>
<dbReference type="GO" id="GO:0031966">
    <property type="term" value="C:mitochondrial membrane"/>
    <property type="evidence" value="ECO:0007669"/>
    <property type="project" value="UniProtKB-SubCell"/>
</dbReference>
<dbReference type="GO" id="GO:0045259">
    <property type="term" value="C:proton-transporting ATP synthase complex"/>
    <property type="evidence" value="ECO:0000250"/>
    <property type="project" value="UniProtKB"/>
</dbReference>
<dbReference type="GO" id="GO:0015078">
    <property type="term" value="F:proton transmembrane transporter activity"/>
    <property type="evidence" value="ECO:0007669"/>
    <property type="project" value="InterPro"/>
</dbReference>
<dbReference type="GO" id="GO:0015986">
    <property type="term" value="P:proton motive force-driven ATP synthesis"/>
    <property type="evidence" value="ECO:0007669"/>
    <property type="project" value="InterPro"/>
</dbReference>
<dbReference type="InterPro" id="IPR039017">
    <property type="entry name" value="ATP8_mammal"/>
</dbReference>
<dbReference type="InterPro" id="IPR001421">
    <property type="entry name" value="ATP8_metazoa"/>
</dbReference>
<dbReference type="PANTHER" id="PTHR13722">
    <property type="entry name" value="ATP SYNTHASE PROTEIN 8"/>
    <property type="match status" value="1"/>
</dbReference>
<dbReference type="PANTHER" id="PTHR13722:SF0">
    <property type="entry name" value="ATP SYNTHASE PROTEIN 8"/>
    <property type="match status" value="1"/>
</dbReference>
<dbReference type="Pfam" id="PF00895">
    <property type="entry name" value="ATP-synt_8"/>
    <property type="match status" value="1"/>
</dbReference>
<keyword id="KW-0007">Acetylation</keyword>
<keyword id="KW-0066">ATP synthesis</keyword>
<keyword id="KW-0138">CF(0)</keyword>
<keyword id="KW-0375">Hydrogen ion transport</keyword>
<keyword id="KW-0406">Ion transport</keyword>
<keyword id="KW-0472">Membrane</keyword>
<keyword id="KW-0496">Mitochondrion</keyword>
<keyword id="KW-0812">Transmembrane</keyword>
<keyword id="KW-1133">Transmembrane helix</keyword>
<keyword id="KW-0813">Transport</keyword>
<proteinExistence type="inferred from homology"/>
<feature type="chain" id="PRO_0000195542" description="ATP synthase F(0) complex subunit 8">
    <location>
        <begin position="1"/>
        <end position="68"/>
    </location>
</feature>
<feature type="transmembrane region" description="Helical" evidence="4">
    <location>
        <begin position="8"/>
        <end position="24"/>
    </location>
</feature>
<feature type="modified residue" description="N6-acetyllysine; alternate" evidence="2">
    <location>
        <position position="54"/>
    </location>
</feature>
<feature type="modified residue" description="N6-succinyllysine; alternate" evidence="2">
    <location>
        <position position="54"/>
    </location>
</feature>
<feature type="modified residue" description="N6-acetyllysine" evidence="2">
    <location>
        <position position="57"/>
    </location>
</feature>
<accession>Q8LX28</accession>
<protein>
    <recommendedName>
        <fullName evidence="1">ATP synthase F(0) complex subunit 8</fullName>
    </recommendedName>
    <alternativeName>
        <fullName>A6L</fullName>
    </alternativeName>
    <alternativeName>
        <fullName>F-ATPase subunit 8</fullName>
    </alternativeName>
</protein>
<name>ATP8_LEMCA</name>
<sequence length="68" mass="8042">MPQLDTSTWLITILSMILTLLIVFQLKISKFNYPLNPTMKNINKDLYTNPWETKWTKIYLPLSLPQQS</sequence>
<comment type="function">
    <text evidence="1 3">Subunit 8, of the mitochondrial membrane ATP synthase complex (F(1)F(0) ATP synthase or Complex V) that produces ATP from ADP in the presence of a proton gradient across the membrane which is generated by electron transport complexes of the respiratory chain. ATP synthase complex consist of a soluble F(1) head domain - the catalytic core - and a membrane F(1) domain - the membrane proton channel. These two domains are linked by a central stalk rotating inside the F(1) region and a stationary peripheral stalk. During catalysis, ATP synthesis in the catalytic domain of F(1) is coupled via a rotary mechanism of the central stalk subunits to proton translocation (By similarity). In vivo, can only synthesize ATP although its ATP hydrolase activity can be activated artificially in vitro (By similarity). Part of the complex F(0) domain (By similarity).</text>
</comment>
<comment type="subunit">
    <text evidence="1">Component of the ATP synthase complex composed at least of ATP5F1A/subunit alpha, ATP5F1B/subunit beta, ATP5MC1/subunit c (homooctomer), MT-ATP6/subunit a, MT-ATP8/subunit 8, ATP5ME/subunit e, ATP5MF/subunit f, ATP5MG/subunit g, ATP5MK/subunit k, ATP5MJ/subunit j, ATP5F1C/subunit gamma, ATP5F1D/subunit delta, ATP5F1E/subunit epsilon, ATP5PF/subunit F6, ATP5PB/subunit b, ATP5PD/subunit d, ATP5PO/subunit OSCP. ATP synthase complex consists of a soluble F(1) head domain (subunits alpha(3) and beta(3)) - the catalytic core - and a membrane F(0) domain - the membrane proton channel (subunits c, a, 8, e, f, g, k and j). These two domains are linked by a central stalk (subunits gamma, delta, and epsilon) rotating inside the F1 region and a stationary peripheral stalk (subunits F6, b, d, and OSCP). Interacts with PRICKLE3.</text>
</comment>
<comment type="subcellular location">
    <subcellularLocation>
        <location>Mitochondrion membrane</location>
        <topology>Single-pass membrane protein</topology>
    </subcellularLocation>
</comment>
<comment type="similarity">
    <text evidence="5">Belongs to the ATPase protein 8 family.</text>
</comment>
<evidence type="ECO:0000250" key="1">
    <source>
        <dbReference type="UniProtKB" id="P03928"/>
    </source>
</evidence>
<evidence type="ECO:0000250" key="2">
    <source>
        <dbReference type="UniProtKB" id="P03930"/>
    </source>
</evidence>
<evidence type="ECO:0000250" key="3">
    <source>
        <dbReference type="UniProtKB" id="P19483"/>
    </source>
</evidence>
<evidence type="ECO:0000255" key="4"/>
<evidence type="ECO:0000305" key="5"/>
<reference key="1">
    <citation type="journal article" date="2002" name="Proc. Natl. Acad. Sci. U.S.A.">
        <title>Mammalian mitogenomic relationships and the root of the eutherian tree.</title>
        <authorList>
            <person name="Arnason U."/>
            <person name="Adegoke J.A."/>
            <person name="Bodin K."/>
            <person name="Born E.W."/>
            <person name="Esa Y.B."/>
            <person name="Gullberg A."/>
            <person name="Nilsson M."/>
            <person name="Short R.V."/>
            <person name="Xu X."/>
            <person name="Janke A."/>
        </authorList>
    </citation>
    <scope>NUCLEOTIDE SEQUENCE [GENOMIC DNA]</scope>
</reference>
<gene>
    <name evidence="1" type="primary">MT-ATP8</name>
    <name type="synonym">ATP8</name>
    <name type="synonym">ATPASE8</name>
    <name type="synonym">MTATP8</name>
</gene>